<comment type="similarity">
    <text evidence="1">Belongs to the UPF0250 family.</text>
</comment>
<sequence>MKTKLNELLEFPTPFTYKVMGLAKPELVDLVVEVVQRHAPGDYTPQVKPSSKGNYHSVSITINATHIEQVETLYEELGDIDIVRMVL</sequence>
<accession>A7MK40</accession>
<keyword id="KW-1185">Reference proteome</keyword>
<name>Y2696_CROS8</name>
<evidence type="ECO:0000255" key="1">
    <source>
        <dbReference type="HAMAP-Rule" id="MF_00659"/>
    </source>
</evidence>
<feature type="chain" id="PRO_1000061867" description="UPF0250 protein ESA_02696">
    <location>
        <begin position="1"/>
        <end position="87"/>
    </location>
</feature>
<dbReference type="EMBL" id="CP000783">
    <property type="protein sequence ID" value="ABU77928.1"/>
    <property type="molecule type" value="Genomic_DNA"/>
</dbReference>
<dbReference type="SMR" id="A7MK40"/>
<dbReference type="KEGG" id="esa:ESA_02696"/>
<dbReference type="HOGENOM" id="CLU_161438_2_1_6"/>
<dbReference type="Proteomes" id="UP000000260">
    <property type="component" value="Chromosome"/>
</dbReference>
<dbReference type="GO" id="GO:0005829">
    <property type="term" value="C:cytosol"/>
    <property type="evidence" value="ECO:0007669"/>
    <property type="project" value="TreeGrafter"/>
</dbReference>
<dbReference type="FunFam" id="3.30.70.260:FF:000002">
    <property type="entry name" value="UPF0250 protein YbeD"/>
    <property type="match status" value="1"/>
</dbReference>
<dbReference type="Gene3D" id="3.30.70.260">
    <property type="match status" value="1"/>
</dbReference>
<dbReference type="HAMAP" id="MF_00659">
    <property type="entry name" value="UPF0250"/>
    <property type="match status" value="1"/>
</dbReference>
<dbReference type="InterPro" id="IPR007454">
    <property type="entry name" value="UPF0250_YbeD-like"/>
</dbReference>
<dbReference type="InterPro" id="IPR027471">
    <property type="entry name" value="YbeD-like_sf"/>
</dbReference>
<dbReference type="NCBIfam" id="NF003447">
    <property type="entry name" value="PRK04998.1"/>
    <property type="match status" value="1"/>
</dbReference>
<dbReference type="PANTHER" id="PTHR38036">
    <property type="entry name" value="UPF0250 PROTEIN YBED"/>
    <property type="match status" value="1"/>
</dbReference>
<dbReference type="PANTHER" id="PTHR38036:SF1">
    <property type="entry name" value="UPF0250 PROTEIN YBED"/>
    <property type="match status" value="1"/>
</dbReference>
<dbReference type="Pfam" id="PF04359">
    <property type="entry name" value="DUF493"/>
    <property type="match status" value="1"/>
</dbReference>
<dbReference type="SUPFAM" id="SSF117991">
    <property type="entry name" value="YbeD/HP0495-like"/>
    <property type="match status" value="1"/>
</dbReference>
<organism>
    <name type="scientific">Cronobacter sakazakii (strain ATCC BAA-894)</name>
    <name type="common">Enterobacter sakazakii</name>
    <dbReference type="NCBI Taxonomy" id="290339"/>
    <lineage>
        <taxon>Bacteria</taxon>
        <taxon>Pseudomonadati</taxon>
        <taxon>Pseudomonadota</taxon>
        <taxon>Gammaproteobacteria</taxon>
        <taxon>Enterobacterales</taxon>
        <taxon>Enterobacteriaceae</taxon>
        <taxon>Cronobacter</taxon>
    </lineage>
</organism>
<reference key="1">
    <citation type="journal article" date="2010" name="PLoS ONE">
        <title>Genome sequence of Cronobacter sakazakii BAA-894 and comparative genomic hybridization analysis with other Cronobacter species.</title>
        <authorList>
            <person name="Kucerova E."/>
            <person name="Clifton S.W."/>
            <person name="Xia X.Q."/>
            <person name="Long F."/>
            <person name="Porwollik S."/>
            <person name="Fulton L."/>
            <person name="Fronick C."/>
            <person name="Minx P."/>
            <person name="Kyung K."/>
            <person name="Warren W."/>
            <person name="Fulton R."/>
            <person name="Feng D."/>
            <person name="Wollam A."/>
            <person name="Shah N."/>
            <person name="Bhonagiri V."/>
            <person name="Nash W.E."/>
            <person name="Hallsworth-Pepin K."/>
            <person name="Wilson R.K."/>
            <person name="McClelland M."/>
            <person name="Forsythe S.J."/>
        </authorList>
    </citation>
    <scope>NUCLEOTIDE SEQUENCE [LARGE SCALE GENOMIC DNA]</scope>
    <source>
        <strain>ATCC BAA-894</strain>
    </source>
</reference>
<protein>
    <recommendedName>
        <fullName evidence="1">UPF0250 protein ESA_02696</fullName>
    </recommendedName>
</protein>
<gene>
    <name type="ordered locus">ESA_02696</name>
</gene>
<proteinExistence type="inferred from homology"/>